<sequence>MNKIIKGDRVVVIAGKDKGKQGQVVRVLGDKVVVEGVNVVKRHQKPNPMRGIEGGIITKEMPLDISNIAILNPETNKADRVGIKLIENEGKVKRVRFFKSNGSIIGA</sequence>
<evidence type="ECO:0000255" key="1">
    <source>
        <dbReference type="HAMAP-Rule" id="MF_01326"/>
    </source>
</evidence>
<evidence type="ECO:0000305" key="2"/>
<reference key="1">
    <citation type="journal article" date="2000" name="Nature">
        <title>Complete DNA sequence of a serogroup A strain of Neisseria meningitidis Z2491.</title>
        <authorList>
            <person name="Parkhill J."/>
            <person name="Achtman M."/>
            <person name="James K.D."/>
            <person name="Bentley S.D."/>
            <person name="Churcher C.M."/>
            <person name="Klee S.R."/>
            <person name="Morelli G."/>
            <person name="Basham D."/>
            <person name="Brown D."/>
            <person name="Chillingworth T."/>
            <person name="Davies R.M."/>
            <person name="Davis P."/>
            <person name="Devlin K."/>
            <person name="Feltwell T."/>
            <person name="Hamlin N."/>
            <person name="Holroyd S."/>
            <person name="Jagels K."/>
            <person name="Leather S."/>
            <person name="Moule S."/>
            <person name="Mungall K.L."/>
            <person name="Quail M.A."/>
            <person name="Rajandream M.A."/>
            <person name="Rutherford K.M."/>
            <person name="Simmonds M."/>
            <person name="Skelton J."/>
            <person name="Whitehead S."/>
            <person name="Spratt B.G."/>
            <person name="Barrell B.G."/>
        </authorList>
    </citation>
    <scope>NUCLEOTIDE SEQUENCE [LARGE SCALE GENOMIC DNA]</scope>
    <source>
        <strain>DSM 15465 / Z2491</strain>
    </source>
</reference>
<name>RL24_NEIMA</name>
<organism>
    <name type="scientific">Neisseria meningitidis serogroup A / serotype 4A (strain DSM 15465 / Z2491)</name>
    <dbReference type="NCBI Taxonomy" id="122587"/>
    <lineage>
        <taxon>Bacteria</taxon>
        <taxon>Pseudomonadati</taxon>
        <taxon>Pseudomonadota</taxon>
        <taxon>Betaproteobacteria</taxon>
        <taxon>Neisseriales</taxon>
        <taxon>Neisseriaceae</taxon>
        <taxon>Neisseria</taxon>
    </lineage>
</organism>
<feature type="chain" id="PRO_0000130685" description="Large ribosomal subunit protein uL24">
    <location>
        <begin position="1"/>
        <end position="107"/>
    </location>
</feature>
<accession>P60732</accession>
<accession>A1INX9</accession>
<accession>Q9JQQ7</accession>
<protein>
    <recommendedName>
        <fullName evidence="1">Large ribosomal subunit protein uL24</fullName>
    </recommendedName>
    <alternativeName>
        <fullName evidence="2">50S ribosomal protein L24</fullName>
    </alternativeName>
</protein>
<proteinExistence type="inferred from homology"/>
<dbReference type="EMBL" id="AL157959">
    <property type="protein sequence ID" value="CAM07436.1"/>
    <property type="molecule type" value="Genomic_DNA"/>
</dbReference>
<dbReference type="RefSeq" id="WP_002215435.1">
    <property type="nucleotide sequence ID" value="NC_003116.1"/>
</dbReference>
<dbReference type="SMR" id="P60732"/>
<dbReference type="EnsemblBacteria" id="CAM07436">
    <property type="protein sequence ID" value="CAM07436"/>
    <property type="gene ID" value="NMA0118"/>
</dbReference>
<dbReference type="GeneID" id="93387228"/>
<dbReference type="KEGG" id="nma:NMA0118"/>
<dbReference type="HOGENOM" id="CLU_093315_2_2_4"/>
<dbReference type="Proteomes" id="UP000000626">
    <property type="component" value="Chromosome"/>
</dbReference>
<dbReference type="GO" id="GO:1990904">
    <property type="term" value="C:ribonucleoprotein complex"/>
    <property type="evidence" value="ECO:0007669"/>
    <property type="project" value="UniProtKB-KW"/>
</dbReference>
<dbReference type="GO" id="GO:0005840">
    <property type="term" value="C:ribosome"/>
    <property type="evidence" value="ECO:0007669"/>
    <property type="project" value="UniProtKB-KW"/>
</dbReference>
<dbReference type="GO" id="GO:0019843">
    <property type="term" value="F:rRNA binding"/>
    <property type="evidence" value="ECO:0007669"/>
    <property type="project" value="UniProtKB-UniRule"/>
</dbReference>
<dbReference type="GO" id="GO:0003735">
    <property type="term" value="F:structural constituent of ribosome"/>
    <property type="evidence" value="ECO:0007669"/>
    <property type="project" value="InterPro"/>
</dbReference>
<dbReference type="GO" id="GO:0006412">
    <property type="term" value="P:translation"/>
    <property type="evidence" value="ECO:0007669"/>
    <property type="project" value="UniProtKB-UniRule"/>
</dbReference>
<dbReference type="CDD" id="cd06089">
    <property type="entry name" value="KOW_RPL26"/>
    <property type="match status" value="1"/>
</dbReference>
<dbReference type="FunFam" id="2.30.30.30:FF:000004">
    <property type="entry name" value="50S ribosomal protein L24"/>
    <property type="match status" value="1"/>
</dbReference>
<dbReference type="Gene3D" id="2.30.30.30">
    <property type="match status" value="1"/>
</dbReference>
<dbReference type="HAMAP" id="MF_01326_B">
    <property type="entry name" value="Ribosomal_uL24_B"/>
    <property type="match status" value="1"/>
</dbReference>
<dbReference type="InterPro" id="IPR005824">
    <property type="entry name" value="KOW"/>
</dbReference>
<dbReference type="InterPro" id="IPR014722">
    <property type="entry name" value="Rib_uL2_dom2"/>
</dbReference>
<dbReference type="InterPro" id="IPR003256">
    <property type="entry name" value="Ribosomal_uL24"/>
</dbReference>
<dbReference type="InterPro" id="IPR005825">
    <property type="entry name" value="Ribosomal_uL24_CS"/>
</dbReference>
<dbReference type="InterPro" id="IPR041988">
    <property type="entry name" value="Ribosomal_uL24_KOW"/>
</dbReference>
<dbReference type="InterPro" id="IPR008991">
    <property type="entry name" value="Translation_prot_SH3-like_sf"/>
</dbReference>
<dbReference type="NCBIfam" id="TIGR01079">
    <property type="entry name" value="rplX_bact"/>
    <property type="match status" value="1"/>
</dbReference>
<dbReference type="PANTHER" id="PTHR12903">
    <property type="entry name" value="MITOCHONDRIAL RIBOSOMAL PROTEIN L24"/>
    <property type="match status" value="1"/>
</dbReference>
<dbReference type="Pfam" id="PF00467">
    <property type="entry name" value="KOW"/>
    <property type="match status" value="1"/>
</dbReference>
<dbReference type="Pfam" id="PF17136">
    <property type="entry name" value="ribosomal_L24"/>
    <property type="match status" value="1"/>
</dbReference>
<dbReference type="SMART" id="SM00739">
    <property type="entry name" value="KOW"/>
    <property type="match status" value="1"/>
</dbReference>
<dbReference type="SUPFAM" id="SSF50104">
    <property type="entry name" value="Translation proteins SH3-like domain"/>
    <property type="match status" value="1"/>
</dbReference>
<dbReference type="PROSITE" id="PS01108">
    <property type="entry name" value="RIBOSOMAL_L24"/>
    <property type="match status" value="1"/>
</dbReference>
<gene>
    <name evidence="1" type="primary">rplX</name>
    <name type="ordered locus">NMA0118</name>
</gene>
<comment type="function">
    <text evidence="1">One of two assembly initiator proteins, it binds directly to the 5'-end of the 23S rRNA, where it nucleates assembly of the 50S subunit.</text>
</comment>
<comment type="function">
    <text evidence="1">One of the proteins that surrounds the polypeptide exit tunnel on the outside of the subunit.</text>
</comment>
<comment type="subunit">
    <text evidence="1">Part of the 50S ribosomal subunit.</text>
</comment>
<comment type="similarity">
    <text evidence="1">Belongs to the universal ribosomal protein uL24 family.</text>
</comment>
<keyword id="KW-0687">Ribonucleoprotein</keyword>
<keyword id="KW-0689">Ribosomal protein</keyword>
<keyword id="KW-0694">RNA-binding</keyword>
<keyword id="KW-0699">rRNA-binding</keyword>